<accession>C3L984</accession>
<dbReference type="EC" id="3.5.2.7" evidence="1"/>
<dbReference type="EMBL" id="CP001215">
    <property type="protein sequence ID" value="ACP12932.1"/>
    <property type="molecule type" value="Genomic_DNA"/>
</dbReference>
<dbReference type="RefSeq" id="WP_000887529.1">
    <property type="nucleotide sequence ID" value="NC_012581.1"/>
</dbReference>
<dbReference type="SMR" id="C3L984"/>
<dbReference type="GeneID" id="75086716"/>
<dbReference type="KEGG" id="bah:BAMEG_0924"/>
<dbReference type="HOGENOM" id="CLU_041647_0_1_9"/>
<dbReference type="UniPathway" id="UPA00379">
    <property type="reaction ID" value="UER00551"/>
</dbReference>
<dbReference type="GO" id="GO:0005737">
    <property type="term" value="C:cytoplasm"/>
    <property type="evidence" value="ECO:0007669"/>
    <property type="project" value="UniProtKB-SubCell"/>
</dbReference>
<dbReference type="GO" id="GO:0050480">
    <property type="term" value="F:imidazolonepropionase activity"/>
    <property type="evidence" value="ECO:0007669"/>
    <property type="project" value="UniProtKB-UniRule"/>
</dbReference>
<dbReference type="GO" id="GO:0005506">
    <property type="term" value="F:iron ion binding"/>
    <property type="evidence" value="ECO:0007669"/>
    <property type="project" value="UniProtKB-UniRule"/>
</dbReference>
<dbReference type="GO" id="GO:0008270">
    <property type="term" value="F:zinc ion binding"/>
    <property type="evidence" value="ECO:0007669"/>
    <property type="project" value="UniProtKB-UniRule"/>
</dbReference>
<dbReference type="GO" id="GO:0019556">
    <property type="term" value="P:L-histidine catabolic process to glutamate and formamide"/>
    <property type="evidence" value="ECO:0007669"/>
    <property type="project" value="UniProtKB-UniPathway"/>
</dbReference>
<dbReference type="GO" id="GO:0019557">
    <property type="term" value="P:L-histidine catabolic process to glutamate and formate"/>
    <property type="evidence" value="ECO:0007669"/>
    <property type="project" value="UniProtKB-UniPathway"/>
</dbReference>
<dbReference type="CDD" id="cd01296">
    <property type="entry name" value="Imidazolone-5PH"/>
    <property type="match status" value="1"/>
</dbReference>
<dbReference type="FunFam" id="3.20.20.140:FF:000007">
    <property type="entry name" value="Imidazolonepropionase"/>
    <property type="match status" value="1"/>
</dbReference>
<dbReference type="Gene3D" id="3.20.20.140">
    <property type="entry name" value="Metal-dependent hydrolases"/>
    <property type="match status" value="1"/>
</dbReference>
<dbReference type="Gene3D" id="2.30.40.10">
    <property type="entry name" value="Urease, subunit C, domain 1"/>
    <property type="match status" value="1"/>
</dbReference>
<dbReference type="HAMAP" id="MF_00372">
    <property type="entry name" value="HutI"/>
    <property type="match status" value="1"/>
</dbReference>
<dbReference type="InterPro" id="IPR006680">
    <property type="entry name" value="Amidohydro-rel"/>
</dbReference>
<dbReference type="InterPro" id="IPR005920">
    <property type="entry name" value="HutI"/>
</dbReference>
<dbReference type="InterPro" id="IPR011059">
    <property type="entry name" value="Metal-dep_hydrolase_composite"/>
</dbReference>
<dbReference type="InterPro" id="IPR032466">
    <property type="entry name" value="Metal_Hydrolase"/>
</dbReference>
<dbReference type="NCBIfam" id="TIGR01224">
    <property type="entry name" value="hutI"/>
    <property type="match status" value="1"/>
</dbReference>
<dbReference type="PANTHER" id="PTHR42752">
    <property type="entry name" value="IMIDAZOLONEPROPIONASE"/>
    <property type="match status" value="1"/>
</dbReference>
<dbReference type="PANTHER" id="PTHR42752:SF1">
    <property type="entry name" value="IMIDAZOLONEPROPIONASE-RELATED"/>
    <property type="match status" value="1"/>
</dbReference>
<dbReference type="Pfam" id="PF01979">
    <property type="entry name" value="Amidohydro_1"/>
    <property type="match status" value="1"/>
</dbReference>
<dbReference type="SUPFAM" id="SSF51338">
    <property type="entry name" value="Composite domain of metallo-dependent hydrolases"/>
    <property type="match status" value="1"/>
</dbReference>
<dbReference type="SUPFAM" id="SSF51556">
    <property type="entry name" value="Metallo-dependent hydrolases"/>
    <property type="match status" value="1"/>
</dbReference>
<organism>
    <name type="scientific">Bacillus anthracis (strain CDC 684 / NRRL 3495)</name>
    <dbReference type="NCBI Taxonomy" id="568206"/>
    <lineage>
        <taxon>Bacteria</taxon>
        <taxon>Bacillati</taxon>
        <taxon>Bacillota</taxon>
        <taxon>Bacilli</taxon>
        <taxon>Bacillales</taxon>
        <taxon>Bacillaceae</taxon>
        <taxon>Bacillus</taxon>
        <taxon>Bacillus cereus group</taxon>
    </lineage>
</organism>
<name>HUTI_BACAC</name>
<evidence type="ECO:0000255" key="1">
    <source>
        <dbReference type="HAMAP-Rule" id="MF_00372"/>
    </source>
</evidence>
<comment type="function">
    <text evidence="1">Catalyzes the hydrolytic cleavage of the carbon-nitrogen bond in imidazolone-5-propanoate to yield N-formimidoyl-L-glutamate. It is the third step in the universal histidine degradation pathway.</text>
</comment>
<comment type="catalytic activity">
    <reaction evidence="1">
        <text>4-imidazolone-5-propanoate + H2O = N-formimidoyl-L-glutamate</text>
        <dbReference type="Rhea" id="RHEA:23660"/>
        <dbReference type="ChEBI" id="CHEBI:15377"/>
        <dbReference type="ChEBI" id="CHEBI:58928"/>
        <dbReference type="ChEBI" id="CHEBI:77893"/>
        <dbReference type="EC" id="3.5.2.7"/>
    </reaction>
</comment>
<comment type="cofactor">
    <cofactor evidence="1">
        <name>Zn(2+)</name>
        <dbReference type="ChEBI" id="CHEBI:29105"/>
    </cofactor>
    <cofactor evidence="1">
        <name>Fe(3+)</name>
        <dbReference type="ChEBI" id="CHEBI:29034"/>
    </cofactor>
    <text evidence="1">Binds 1 zinc or iron ion per subunit.</text>
</comment>
<comment type="pathway">
    <text evidence="1">Amino-acid degradation; L-histidine degradation into L-glutamate; N-formimidoyl-L-glutamate from L-histidine: step 3/3.</text>
</comment>
<comment type="subcellular location">
    <subcellularLocation>
        <location evidence="1">Cytoplasm</location>
    </subcellularLocation>
</comment>
<comment type="similarity">
    <text evidence="1">Belongs to the metallo-dependent hydrolases superfamily. HutI family.</text>
</comment>
<keyword id="KW-0963">Cytoplasm</keyword>
<keyword id="KW-0369">Histidine metabolism</keyword>
<keyword id="KW-0378">Hydrolase</keyword>
<keyword id="KW-0408">Iron</keyword>
<keyword id="KW-0479">Metal-binding</keyword>
<keyword id="KW-0862">Zinc</keyword>
<reference key="1">
    <citation type="submission" date="2008-10" db="EMBL/GenBank/DDBJ databases">
        <title>Genome sequence of Bacillus anthracis str. CDC 684.</title>
        <authorList>
            <person name="Dodson R.J."/>
            <person name="Munk A.C."/>
            <person name="Brettin T."/>
            <person name="Bruce D."/>
            <person name="Detter C."/>
            <person name="Tapia R."/>
            <person name="Han C."/>
            <person name="Sutton G."/>
            <person name="Sims D."/>
        </authorList>
    </citation>
    <scope>NUCLEOTIDE SEQUENCE [LARGE SCALE GENOMIC DNA]</scope>
    <source>
        <strain>CDC 684 / NRRL 3495</strain>
    </source>
</reference>
<protein>
    <recommendedName>
        <fullName evidence="1">Imidazolonepropionase</fullName>
        <ecNumber evidence="1">3.5.2.7</ecNumber>
    </recommendedName>
    <alternativeName>
        <fullName evidence="1">Imidazolone-5-propionate hydrolase</fullName>
    </alternativeName>
</protein>
<proteinExistence type="inferred from homology"/>
<feature type="chain" id="PRO_1000133878" description="Imidazolonepropionase">
    <location>
        <begin position="1"/>
        <end position="423"/>
    </location>
</feature>
<feature type="binding site" evidence="1">
    <location>
        <position position="78"/>
    </location>
    <ligand>
        <name>Fe(3+)</name>
        <dbReference type="ChEBI" id="CHEBI:29034"/>
    </ligand>
</feature>
<feature type="binding site" evidence="1">
    <location>
        <position position="78"/>
    </location>
    <ligand>
        <name>Zn(2+)</name>
        <dbReference type="ChEBI" id="CHEBI:29105"/>
    </ligand>
</feature>
<feature type="binding site" evidence="1">
    <location>
        <position position="80"/>
    </location>
    <ligand>
        <name>Fe(3+)</name>
        <dbReference type="ChEBI" id="CHEBI:29034"/>
    </ligand>
</feature>
<feature type="binding site" evidence="1">
    <location>
        <position position="80"/>
    </location>
    <ligand>
        <name>Zn(2+)</name>
        <dbReference type="ChEBI" id="CHEBI:29105"/>
    </ligand>
</feature>
<feature type="binding site" evidence="1">
    <location>
        <position position="87"/>
    </location>
    <ligand>
        <name>4-imidazolone-5-propanoate</name>
        <dbReference type="ChEBI" id="CHEBI:77893"/>
    </ligand>
</feature>
<feature type="binding site" evidence="1">
    <location>
        <position position="150"/>
    </location>
    <ligand>
        <name>4-imidazolone-5-propanoate</name>
        <dbReference type="ChEBI" id="CHEBI:77893"/>
    </ligand>
</feature>
<feature type="binding site" evidence="1">
    <location>
        <position position="150"/>
    </location>
    <ligand>
        <name>N-formimidoyl-L-glutamate</name>
        <dbReference type="ChEBI" id="CHEBI:58928"/>
    </ligand>
</feature>
<feature type="binding site" evidence="1">
    <location>
        <position position="183"/>
    </location>
    <ligand>
        <name>4-imidazolone-5-propanoate</name>
        <dbReference type="ChEBI" id="CHEBI:77893"/>
    </ligand>
</feature>
<feature type="binding site" evidence="1">
    <location>
        <position position="247"/>
    </location>
    <ligand>
        <name>Fe(3+)</name>
        <dbReference type="ChEBI" id="CHEBI:29034"/>
    </ligand>
</feature>
<feature type="binding site" evidence="1">
    <location>
        <position position="247"/>
    </location>
    <ligand>
        <name>Zn(2+)</name>
        <dbReference type="ChEBI" id="CHEBI:29105"/>
    </ligand>
</feature>
<feature type="binding site" evidence="1">
    <location>
        <position position="250"/>
    </location>
    <ligand>
        <name>4-imidazolone-5-propanoate</name>
        <dbReference type="ChEBI" id="CHEBI:77893"/>
    </ligand>
</feature>
<feature type="binding site" evidence="1">
    <location>
        <position position="322"/>
    </location>
    <ligand>
        <name>Fe(3+)</name>
        <dbReference type="ChEBI" id="CHEBI:29034"/>
    </ligand>
</feature>
<feature type="binding site" evidence="1">
    <location>
        <position position="322"/>
    </location>
    <ligand>
        <name>Zn(2+)</name>
        <dbReference type="ChEBI" id="CHEBI:29105"/>
    </ligand>
</feature>
<feature type="binding site" evidence="1">
    <location>
        <position position="324"/>
    </location>
    <ligand>
        <name>N-formimidoyl-L-glutamate</name>
        <dbReference type="ChEBI" id="CHEBI:58928"/>
    </ligand>
</feature>
<feature type="binding site" evidence="1">
    <location>
        <position position="326"/>
    </location>
    <ligand>
        <name>N-formimidoyl-L-glutamate</name>
        <dbReference type="ChEBI" id="CHEBI:58928"/>
    </ligand>
</feature>
<feature type="binding site" evidence="1">
    <location>
        <position position="327"/>
    </location>
    <ligand>
        <name>4-imidazolone-5-propanoate</name>
        <dbReference type="ChEBI" id="CHEBI:77893"/>
    </ligand>
</feature>
<sequence>MLDTLLINIGQLLTMDQEDGLLRREAMNTLPVIENGAVGIENGVITFVGTAEEAKGLQAKEVIDCGGKMVSPGLVDPHTHLVFGGSRENEIALKLQGVPYLEILEQGGGILSTVNATKQASKEELVQKAKFHLDRMLSFGVTTVEAKSGYGLDDETEWKQLEATAQLQKEHPIDLVSTFLGAHAVPKEYKGRSKEFLQWMLDLLPEMKEKQLAEFVDIFCETGVFSVEESKEFLLKAKELGFDVKIHADEIDPLGGAEAAAEIGAASADHLVGASDKGIEMLANSNTVATLLPGTTFYLNKESFARGRKMIDEGVAVALATDFNPGSCPTENIQLIMSIAMLKLKMTPEEVWNAVTVNSSYAINRGDVAGKIRVGRKADLVLWDAYNYAYVPYHYGVSHVNTVWKNGNIAYTRGEQSWSTATI</sequence>
<gene>
    <name evidence="1" type="primary">hutI</name>
    <name type="ordered locus">BAMEG_0924</name>
</gene>